<evidence type="ECO:0000255" key="1">
    <source>
        <dbReference type="HAMAP-Rule" id="MF_00429"/>
    </source>
</evidence>
<reference key="1">
    <citation type="journal article" date="2008" name="Genome Res.">
        <title>Chlamydia trachomatis: genome sequence analysis of lymphogranuloma venereum isolates.</title>
        <authorList>
            <person name="Thomson N.R."/>
            <person name="Holden M.T.G."/>
            <person name="Carder C."/>
            <person name="Lennard N."/>
            <person name="Lockey S.J."/>
            <person name="Marsh P."/>
            <person name="Skipp P."/>
            <person name="O'Connor C.D."/>
            <person name="Goodhead I."/>
            <person name="Norbertzcak H."/>
            <person name="Harris B."/>
            <person name="Ormond D."/>
            <person name="Rance R."/>
            <person name="Quail M.A."/>
            <person name="Parkhill J."/>
            <person name="Stephens R.S."/>
            <person name="Clarke I.N."/>
        </authorList>
    </citation>
    <scope>NUCLEOTIDE SEQUENCE [LARGE SCALE GENOMIC DNA]</scope>
    <source>
        <strain>ATCC VR-902B / DSM 19102 / 434/Bu</strain>
    </source>
</reference>
<organism>
    <name type="scientific">Chlamydia trachomatis serovar L2 (strain ATCC VR-902B / DSM 19102 / 434/Bu)</name>
    <dbReference type="NCBI Taxonomy" id="471472"/>
    <lineage>
        <taxon>Bacteria</taxon>
        <taxon>Pseudomonadati</taxon>
        <taxon>Chlamydiota</taxon>
        <taxon>Chlamydiia</taxon>
        <taxon>Chlamydiales</taxon>
        <taxon>Chlamydiaceae</taxon>
        <taxon>Chlamydia/Chlamydophila group</taxon>
        <taxon>Chlamydia</taxon>
    </lineage>
</organism>
<dbReference type="EC" id="7.2.1.1" evidence="1"/>
<dbReference type="EMBL" id="AM884176">
    <property type="protein sequence ID" value="CAP03973.1"/>
    <property type="molecule type" value="Genomic_DNA"/>
</dbReference>
<dbReference type="RefSeq" id="WP_009873696.1">
    <property type="nucleotide sequence ID" value="NC_010287.1"/>
</dbReference>
<dbReference type="RefSeq" id="YP_001654610.1">
    <property type="nucleotide sequence ID" value="NC_010287.1"/>
</dbReference>
<dbReference type="SMR" id="B0B7J7"/>
<dbReference type="KEGG" id="ctb:CTL0533"/>
<dbReference type="PATRIC" id="fig|471472.4.peg.572"/>
<dbReference type="HOGENOM" id="CLU_095255_0_0_0"/>
<dbReference type="Proteomes" id="UP001154402">
    <property type="component" value="Chromosome"/>
</dbReference>
<dbReference type="GO" id="GO:0009276">
    <property type="term" value="C:Gram-negative-bacterium-type cell wall"/>
    <property type="evidence" value="ECO:0007669"/>
    <property type="project" value="InterPro"/>
</dbReference>
<dbReference type="GO" id="GO:0005886">
    <property type="term" value="C:plasma membrane"/>
    <property type="evidence" value="ECO:0007669"/>
    <property type="project" value="UniProtKB-SubCell"/>
</dbReference>
<dbReference type="GO" id="GO:0016655">
    <property type="term" value="F:oxidoreductase activity, acting on NAD(P)H, quinone or similar compound as acceptor"/>
    <property type="evidence" value="ECO:0007669"/>
    <property type="project" value="UniProtKB-UniRule"/>
</dbReference>
<dbReference type="GO" id="GO:0022904">
    <property type="term" value="P:respiratory electron transport chain"/>
    <property type="evidence" value="ECO:0007669"/>
    <property type="project" value="InterPro"/>
</dbReference>
<dbReference type="GO" id="GO:0006814">
    <property type="term" value="P:sodium ion transport"/>
    <property type="evidence" value="ECO:0007669"/>
    <property type="project" value="UniProtKB-UniRule"/>
</dbReference>
<dbReference type="HAMAP" id="MF_00429">
    <property type="entry name" value="NqrE"/>
    <property type="match status" value="1"/>
</dbReference>
<dbReference type="InterPro" id="IPR003667">
    <property type="entry name" value="NqrDE/RnfAE"/>
</dbReference>
<dbReference type="InterPro" id="IPR050133">
    <property type="entry name" value="NqrDE/RnfAE_oxidrdctase"/>
</dbReference>
<dbReference type="InterPro" id="IPR010967">
    <property type="entry name" value="NqrE"/>
</dbReference>
<dbReference type="NCBIfam" id="TIGR01940">
    <property type="entry name" value="nqrE"/>
    <property type="match status" value="1"/>
</dbReference>
<dbReference type="NCBIfam" id="NF002200">
    <property type="entry name" value="PRK01061.1"/>
    <property type="match status" value="1"/>
</dbReference>
<dbReference type="PANTHER" id="PTHR30335">
    <property type="entry name" value="INTEGRAL MEMBRANE PROTEIN OF SOXR-REDUCING COMPLEX"/>
    <property type="match status" value="1"/>
</dbReference>
<dbReference type="PANTHER" id="PTHR30335:SF1">
    <property type="entry name" value="NA(+)-TRANSLOCATING NADH-QUINONE REDUCTASE SUBUNIT E"/>
    <property type="match status" value="1"/>
</dbReference>
<dbReference type="Pfam" id="PF02508">
    <property type="entry name" value="Rnf-Nqr"/>
    <property type="match status" value="1"/>
</dbReference>
<dbReference type="PIRSF" id="PIRSF006102">
    <property type="entry name" value="NQR_DE"/>
    <property type="match status" value="1"/>
</dbReference>
<protein>
    <recommendedName>
        <fullName evidence="1">Na(+)-translocating NADH-quinone reductase subunit E</fullName>
        <shortName evidence="1">Na(+)-NQR subunit E</shortName>
        <shortName evidence="1">Na(+)-translocating NQR subunit E</shortName>
        <ecNumber evidence="1">7.2.1.1</ecNumber>
    </recommendedName>
    <alternativeName>
        <fullName evidence="1">NQR complex subunit E</fullName>
    </alternativeName>
    <alternativeName>
        <fullName evidence="1">NQR-1 subunit E</fullName>
    </alternativeName>
</protein>
<gene>
    <name evidence="1" type="primary">nqrE</name>
    <name type="ordered locus">CTL0533</name>
</gene>
<name>NQRE_CHLT2</name>
<sequence>MWLGDYSLLNLLGIFLQATFIQNILLSTFLGMCSYLACSSRLSTANGLGMSVALVLTITGSINWLVHYFITKPGALAWLSPALANIDLSFLELIMFIVVIAAFTQILELLLERFSRNLYLALGIFLPLIAVNCAILGGVLFGITRNYPFLPMVVFSLGSGCGWWLAIVLFATIREKLAYSDVPQHLRGTGISFITTGLMAMAFMGLTGIDISKPTTSKPAFVMNIATDSPQPNTHSSSEEPKAS</sequence>
<feature type="chain" id="PRO_1000191699" description="Na(+)-translocating NADH-quinone reductase subunit E">
    <location>
        <begin position="1"/>
        <end position="244"/>
    </location>
</feature>
<feature type="transmembrane region" description="Helical" evidence="1">
    <location>
        <begin position="11"/>
        <end position="31"/>
    </location>
</feature>
<feature type="transmembrane region" description="Helical" evidence="1">
    <location>
        <begin position="50"/>
        <end position="70"/>
    </location>
</feature>
<feature type="transmembrane region" description="Helical" evidence="1">
    <location>
        <begin position="90"/>
        <end position="110"/>
    </location>
</feature>
<feature type="transmembrane region" description="Helical" evidence="1">
    <location>
        <begin position="123"/>
        <end position="143"/>
    </location>
</feature>
<feature type="transmembrane region" description="Helical" evidence="1">
    <location>
        <begin position="153"/>
        <end position="173"/>
    </location>
</feature>
<feature type="transmembrane region" description="Helical" evidence="1">
    <location>
        <begin position="191"/>
        <end position="211"/>
    </location>
</feature>
<proteinExistence type="inferred from homology"/>
<comment type="function">
    <text evidence="1">NQR complex catalyzes the reduction of ubiquinone-1 to ubiquinol by two successive reactions, coupled with the transport of Na(+) ions from the cytoplasm to the periplasm. NqrA to NqrE are probably involved in the second step, the conversion of ubisemiquinone to ubiquinol.</text>
</comment>
<comment type="catalytic activity">
    <reaction evidence="1">
        <text>a ubiquinone + n Na(+)(in) + NADH + H(+) = a ubiquinol + n Na(+)(out) + NAD(+)</text>
        <dbReference type="Rhea" id="RHEA:47748"/>
        <dbReference type="Rhea" id="RHEA-COMP:9565"/>
        <dbReference type="Rhea" id="RHEA-COMP:9566"/>
        <dbReference type="ChEBI" id="CHEBI:15378"/>
        <dbReference type="ChEBI" id="CHEBI:16389"/>
        <dbReference type="ChEBI" id="CHEBI:17976"/>
        <dbReference type="ChEBI" id="CHEBI:29101"/>
        <dbReference type="ChEBI" id="CHEBI:57540"/>
        <dbReference type="ChEBI" id="CHEBI:57945"/>
        <dbReference type="EC" id="7.2.1.1"/>
    </reaction>
</comment>
<comment type="subunit">
    <text evidence="1">Composed of six subunits; NqrA, NqrB, NqrC, NqrD, NqrE and NqrF.</text>
</comment>
<comment type="subcellular location">
    <subcellularLocation>
        <location evidence="1">Cell inner membrane</location>
        <topology evidence="1">Multi-pass membrane protein</topology>
    </subcellularLocation>
</comment>
<comment type="similarity">
    <text evidence="1">Belongs to the NqrDE/RnfAE family.</text>
</comment>
<accession>B0B7J7</accession>
<keyword id="KW-0997">Cell inner membrane</keyword>
<keyword id="KW-1003">Cell membrane</keyword>
<keyword id="KW-0406">Ion transport</keyword>
<keyword id="KW-0472">Membrane</keyword>
<keyword id="KW-0520">NAD</keyword>
<keyword id="KW-0915">Sodium</keyword>
<keyword id="KW-0739">Sodium transport</keyword>
<keyword id="KW-1278">Translocase</keyword>
<keyword id="KW-0812">Transmembrane</keyword>
<keyword id="KW-1133">Transmembrane helix</keyword>
<keyword id="KW-0813">Transport</keyword>
<keyword id="KW-0830">Ubiquinone</keyword>